<gene>
    <name type="primary">TMEM143</name>
    <name type="ORF">UNQ5922/PRO19813</name>
</gene>
<sequence>MTVELWLRLRGKGLAMLHVTRGVWGSRVRVWPLLPALLGPPRALSSLAAKMGEYRKMWNPREPRDWAQQYRERFIPFSKEQLLRLLIQEFHSSPAEKAALEAFSAHVDFCTLFHYHQILARLQALYDPINPDRETLDQPSLTDPQRLSNEQEVLRALEPLLAQANFSPLSEDTLAYALVVHHPQDEVQVTVNLDQYVYIHFWALGQRVGQMPLKSSVGSRRGFFTKLPPAERRYFKRVVLAARTKRGHLVLKSFKDTPLEGLEQLLPELKVRTPTLQRALLNLMLVVSGVAIFVNVGMVVLTDLKVATSLLLLLFAIFMGLRASKMFGQRRSAQALELAHMLYYRSTSNNSELLSALALRAQDEHTKEALLAHSFLARRPGGTQGSPEETSRWLRSEVENWLLAKSGCEVTFNGTRALAHLQALTPSMGLYPPPGFPKLDPVAPITSEPPQATPSSNIS</sequence>
<feature type="chain" id="PRO_0000285958" description="Transmembrane protein 143">
    <location>
        <begin position="1"/>
        <end position="459"/>
    </location>
</feature>
<feature type="transmembrane region" description="Helical" evidence="2">
    <location>
        <begin position="280"/>
        <end position="300"/>
    </location>
</feature>
<feature type="transmembrane region" description="Helical" evidence="2">
    <location>
        <begin position="301"/>
        <end position="321"/>
    </location>
</feature>
<feature type="region of interest" description="Disordered" evidence="3">
    <location>
        <begin position="435"/>
        <end position="459"/>
    </location>
</feature>
<feature type="compositionally biased region" description="Polar residues" evidence="3">
    <location>
        <begin position="448"/>
        <end position="459"/>
    </location>
</feature>
<feature type="modified residue" description="Phosphoserine" evidence="1">
    <location>
        <position position="332"/>
    </location>
</feature>
<feature type="splice variant" id="VSP_024930" description="In isoform 2." evidence="4 5">
    <location>
        <begin position="88"/>
        <end position="187"/>
    </location>
</feature>
<feature type="splice variant" id="VSP_024931" description="In isoform 3." evidence="5">
    <original>EFHSSPAEKAALEAFSAHVDFCTLFHYHQILARLQALYDP</original>
    <variation>VTGIPLESGREGGFGGVLSPRGLLHPVPLPPNPGPAAGLI</variation>
    <location>
        <begin position="89"/>
        <end position="128"/>
    </location>
</feature>
<feature type="splice variant" id="VSP_024932" description="In isoform 3." evidence="5">
    <location>
        <begin position="129"/>
        <end position="459"/>
    </location>
</feature>
<feature type="sequence variant" id="VAR_032058" description="In dbSNP:rs34488893.">
    <original>D</original>
    <variation>N</variation>
    <location>
        <position position="143"/>
    </location>
</feature>
<proteinExistence type="evidence at protein level"/>
<keyword id="KW-0025">Alternative splicing</keyword>
<keyword id="KW-0472">Membrane</keyword>
<keyword id="KW-0597">Phosphoprotein</keyword>
<keyword id="KW-1267">Proteomics identification</keyword>
<keyword id="KW-1185">Reference proteome</keyword>
<keyword id="KW-0812">Transmembrane</keyword>
<keyword id="KW-1133">Transmembrane helix</keyword>
<name>TM143_HUMAN</name>
<accession>Q96AN5</accession>
<accession>A8K656</accession>
<accession>Q6UXY4</accession>
<accession>Q9NV49</accession>
<evidence type="ECO:0000250" key="1">
    <source>
        <dbReference type="UniProtKB" id="Q8VD26"/>
    </source>
</evidence>
<evidence type="ECO:0000255" key="2"/>
<evidence type="ECO:0000256" key="3">
    <source>
        <dbReference type="SAM" id="MobiDB-lite"/>
    </source>
</evidence>
<evidence type="ECO:0000303" key="4">
    <source>
    </source>
</evidence>
<evidence type="ECO:0000303" key="5">
    <source>
    </source>
</evidence>
<evidence type="ECO:0000305" key="6"/>
<reference key="1">
    <citation type="journal article" date="2003" name="Genome Res.">
        <title>The secreted protein discovery initiative (SPDI), a large-scale effort to identify novel human secreted and transmembrane proteins: a bioinformatics assessment.</title>
        <authorList>
            <person name="Clark H.F."/>
            <person name="Gurney A.L."/>
            <person name="Abaya E."/>
            <person name="Baker K."/>
            <person name="Baldwin D.T."/>
            <person name="Brush J."/>
            <person name="Chen J."/>
            <person name="Chow B."/>
            <person name="Chui C."/>
            <person name="Crowley C."/>
            <person name="Currell B."/>
            <person name="Deuel B."/>
            <person name="Dowd P."/>
            <person name="Eaton D."/>
            <person name="Foster J.S."/>
            <person name="Grimaldi C."/>
            <person name="Gu Q."/>
            <person name="Hass P.E."/>
            <person name="Heldens S."/>
            <person name="Huang A."/>
            <person name="Kim H.S."/>
            <person name="Klimowski L."/>
            <person name="Jin Y."/>
            <person name="Johnson S."/>
            <person name="Lee J."/>
            <person name="Lewis L."/>
            <person name="Liao D."/>
            <person name="Mark M.R."/>
            <person name="Robbie E."/>
            <person name="Sanchez C."/>
            <person name="Schoenfeld J."/>
            <person name="Seshagiri S."/>
            <person name="Simmons L."/>
            <person name="Singh J."/>
            <person name="Smith V."/>
            <person name="Stinson J."/>
            <person name="Vagts A."/>
            <person name="Vandlen R.L."/>
            <person name="Watanabe C."/>
            <person name="Wieand D."/>
            <person name="Woods K."/>
            <person name="Xie M.-H."/>
            <person name="Yansura D.G."/>
            <person name="Yi S."/>
            <person name="Yu G."/>
            <person name="Yuan J."/>
            <person name="Zhang M."/>
            <person name="Zhang Z."/>
            <person name="Goddard A.D."/>
            <person name="Wood W.I."/>
            <person name="Godowski P.J."/>
            <person name="Gray A.M."/>
        </authorList>
    </citation>
    <scope>NUCLEOTIDE SEQUENCE [LARGE SCALE MRNA] (ISOFORM 2)</scope>
</reference>
<reference key="2">
    <citation type="journal article" date="2004" name="Nat. Genet.">
        <title>Complete sequencing and characterization of 21,243 full-length human cDNAs.</title>
        <authorList>
            <person name="Ota T."/>
            <person name="Suzuki Y."/>
            <person name="Nishikawa T."/>
            <person name="Otsuki T."/>
            <person name="Sugiyama T."/>
            <person name="Irie R."/>
            <person name="Wakamatsu A."/>
            <person name="Hayashi K."/>
            <person name="Sato H."/>
            <person name="Nagai K."/>
            <person name="Kimura K."/>
            <person name="Makita H."/>
            <person name="Sekine M."/>
            <person name="Obayashi M."/>
            <person name="Nishi T."/>
            <person name="Shibahara T."/>
            <person name="Tanaka T."/>
            <person name="Ishii S."/>
            <person name="Yamamoto J."/>
            <person name="Saito K."/>
            <person name="Kawai Y."/>
            <person name="Isono Y."/>
            <person name="Nakamura Y."/>
            <person name="Nagahari K."/>
            <person name="Murakami K."/>
            <person name="Yasuda T."/>
            <person name="Iwayanagi T."/>
            <person name="Wagatsuma M."/>
            <person name="Shiratori A."/>
            <person name="Sudo H."/>
            <person name="Hosoiri T."/>
            <person name="Kaku Y."/>
            <person name="Kodaira H."/>
            <person name="Kondo H."/>
            <person name="Sugawara M."/>
            <person name="Takahashi M."/>
            <person name="Kanda K."/>
            <person name="Yokoi T."/>
            <person name="Furuya T."/>
            <person name="Kikkawa E."/>
            <person name="Omura Y."/>
            <person name="Abe K."/>
            <person name="Kamihara K."/>
            <person name="Katsuta N."/>
            <person name="Sato K."/>
            <person name="Tanikawa M."/>
            <person name="Yamazaki M."/>
            <person name="Ninomiya K."/>
            <person name="Ishibashi T."/>
            <person name="Yamashita H."/>
            <person name="Murakawa K."/>
            <person name="Fujimori K."/>
            <person name="Tanai H."/>
            <person name="Kimata M."/>
            <person name="Watanabe M."/>
            <person name="Hiraoka S."/>
            <person name="Chiba Y."/>
            <person name="Ishida S."/>
            <person name="Ono Y."/>
            <person name="Takiguchi S."/>
            <person name="Watanabe S."/>
            <person name="Yosida M."/>
            <person name="Hotuta T."/>
            <person name="Kusano J."/>
            <person name="Kanehori K."/>
            <person name="Takahashi-Fujii A."/>
            <person name="Hara H."/>
            <person name="Tanase T.-O."/>
            <person name="Nomura Y."/>
            <person name="Togiya S."/>
            <person name="Komai F."/>
            <person name="Hara R."/>
            <person name="Takeuchi K."/>
            <person name="Arita M."/>
            <person name="Imose N."/>
            <person name="Musashino K."/>
            <person name="Yuuki H."/>
            <person name="Oshima A."/>
            <person name="Sasaki N."/>
            <person name="Aotsuka S."/>
            <person name="Yoshikawa Y."/>
            <person name="Matsunawa H."/>
            <person name="Ichihara T."/>
            <person name="Shiohata N."/>
            <person name="Sano S."/>
            <person name="Moriya S."/>
            <person name="Momiyama H."/>
            <person name="Satoh N."/>
            <person name="Takami S."/>
            <person name="Terashima Y."/>
            <person name="Suzuki O."/>
            <person name="Nakagawa S."/>
            <person name="Senoh A."/>
            <person name="Mizoguchi H."/>
            <person name="Goto Y."/>
            <person name="Shimizu F."/>
            <person name="Wakebe H."/>
            <person name="Hishigaki H."/>
            <person name="Watanabe T."/>
            <person name="Sugiyama A."/>
            <person name="Takemoto M."/>
            <person name="Kawakami B."/>
            <person name="Yamazaki M."/>
            <person name="Watanabe K."/>
            <person name="Kumagai A."/>
            <person name="Itakura S."/>
            <person name="Fukuzumi Y."/>
            <person name="Fujimori Y."/>
            <person name="Komiyama M."/>
            <person name="Tashiro H."/>
            <person name="Tanigami A."/>
            <person name="Fujiwara T."/>
            <person name="Ono T."/>
            <person name="Yamada K."/>
            <person name="Fujii Y."/>
            <person name="Ozaki K."/>
            <person name="Hirao M."/>
            <person name="Ohmori Y."/>
            <person name="Kawabata A."/>
            <person name="Hikiji T."/>
            <person name="Kobatake N."/>
            <person name="Inagaki H."/>
            <person name="Ikema Y."/>
            <person name="Okamoto S."/>
            <person name="Okitani R."/>
            <person name="Kawakami T."/>
            <person name="Noguchi S."/>
            <person name="Itoh T."/>
            <person name="Shigeta K."/>
            <person name="Senba T."/>
            <person name="Matsumura K."/>
            <person name="Nakajima Y."/>
            <person name="Mizuno T."/>
            <person name="Morinaga M."/>
            <person name="Sasaki M."/>
            <person name="Togashi T."/>
            <person name="Oyama M."/>
            <person name="Hata H."/>
            <person name="Watanabe M."/>
            <person name="Komatsu T."/>
            <person name="Mizushima-Sugano J."/>
            <person name="Satoh T."/>
            <person name="Shirai Y."/>
            <person name="Takahashi Y."/>
            <person name="Nakagawa K."/>
            <person name="Okumura K."/>
            <person name="Nagase T."/>
            <person name="Nomura N."/>
            <person name="Kikuchi H."/>
            <person name="Masuho Y."/>
            <person name="Yamashita R."/>
            <person name="Nakai K."/>
            <person name="Yada T."/>
            <person name="Nakamura Y."/>
            <person name="Ohara O."/>
            <person name="Isogai T."/>
            <person name="Sugano S."/>
        </authorList>
    </citation>
    <scope>NUCLEOTIDE SEQUENCE [LARGE SCALE MRNA] (ISOFORMS 2 AND 3)</scope>
    <source>
        <tissue>Ovarian carcinoma</tissue>
        <tissue>Pericardium</tissue>
    </source>
</reference>
<reference key="3">
    <citation type="submission" date="2005-07" db="EMBL/GenBank/DDBJ databases">
        <authorList>
            <person name="Mural R.J."/>
            <person name="Istrail S."/>
            <person name="Sutton G.G."/>
            <person name="Florea L."/>
            <person name="Halpern A.L."/>
            <person name="Mobarry C.M."/>
            <person name="Lippert R."/>
            <person name="Walenz B."/>
            <person name="Shatkay H."/>
            <person name="Dew I."/>
            <person name="Miller J.R."/>
            <person name="Flanigan M.J."/>
            <person name="Edwards N.J."/>
            <person name="Bolanos R."/>
            <person name="Fasulo D."/>
            <person name="Halldorsson B.V."/>
            <person name="Hannenhalli S."/>
            <person name="Turner R."/>
            <person name="Yooseph S."/>
            <person name="Lu F."/>
            <person name="Nusskern D.R."/>
            <person name="Shue B.C."/>
            <person name="Zheng X.H."/>
            <person name="Zhong F."/>
            <person name="Delcher A.L."/>
            <person name="Huson D.H."/>
            <person name="Kravitz S.A."/>
            <person name="Mouchard L."/>
            <person name="Reinert K."/>
            <person name="Remington K.A."/>
            <person name="Clark A.G."/>
            <person name="Waterman M.S."/>
            <person name="Eichler E.E."/>
            <person name="Adams M.D."/>
            <person name="Hunkapiller M.W."/>
            <person name="Myers E.W."/>
            <person name="Venter J.C."/>
        </authorList>
    </citation>
    <scope>NUCLEOTIDE SEQUENCE [LARGE SCALE GENOMIC DNA]</scope>
</reference>
<reference key="4">
    <citation type="journal article" date="2004" name="Genome Res.">
        <title>The status, quality, and expansion of the NIH full-length cDNA project: the Mammalian Gene Collection (MGC).</title>
        <authorList>
            <consortium name="The MGC Project Team"/>
        </authorList>
    </citation>
    <scope>NUCLEOTIDE SEQUENCE [LARGE SCALE MRNA] (ISOFORM 1)</scope>
    <source>
        <tissue>Duodenum</tissue>
    </source>
</reference>
<dbReference type="EMBL" id="AY358161">
    <property type="protein sequence ID" value="AAQ88528.1"/>
    <property type="molecule type" value="mRNA"/>
</dbReference>
<dbReference type="EMBL" id="AK001784">
    <property type="status" value="NOT_ANNOTATED_CDS"/>
    <property type="molecule type" value="mRNA"/>
</dbReference>
<dbReference type="EMBL" id="AK291521">
    <property type="protein sequence ID" value="BAF84210.1"/>
    <property type="molecule type" value="mRNA"/>
</dbReference>
<dbReference type="EMBL" id="CH471177">
    <property type="protein sequence ID" value="EAW52337.1"/>
    <property type="molecule type" value="Genomic_DNA"/>
</dbReference>
<dbReference type="EMBL" id="BC016919">
    <property type="protein sequence ID" value="AAH16919.1"/>
    <property type="molecule type" value="mRNA"/>
</dbReference>
<dbReference type="CCDS" id="CCDS12716.1">
    <molecule id="Q96AN5-1"/>
</dbReference>
<dbReference type="CCDS" id="CCDS77325.1">
    <molecule id="Q96AN5-2"/>
</dbReference>
<dbReference type="RefSeq" id="NP_001290469.1">
    <molecule id="Q96AN5-2"/>
    <property type="nucleotide sequence ID" value="NM_001303540.2"/>
</dbReference>
<dbReference type="RefSeq" id="NP_060743.2">
    <molecule id="Q96AN5-1"/>
    <property type="nucleotide sequence ID" value="NM_018273.3"/>
</dbReference>
<dbReference type="BioGRID" id="120551">
    <property type="interactions" value="35"/>
</dbReference>
<dbReference type="FunCoup" id="Q96AN5">
    <property type="interactions" value="600"/>
</dbReference>
<dbReference type="IntAct" id="Q96AN5">
    <property type="interactions" value="28"/>
</dbReference>
<dbReference type="STRING" id="9606.ENSP00000293261"/>
<dbReference type="GlyGen" id="Q96AN5">
    <property type="glycosylation" value="1 site"/>
</dbReference>
<dbReference type="iPTMnet" id="Q96AN5"/>
<dbReference type="PhosphoSitePlus" id="Q96AN5"/>
<dbReference type="SwissPalm" id="Q96AN5"/>
<dbReference type="BioMuta" id="TMEM143"/>
<dbReference type="DMDM" id="74731136"/>
<dbReference type="jPOST" id="Q96AN5"/>
<dbReference type="MassIVE" id="Q96AN5"/>
<dbReference type="PaxDb" id="9606-ENSP00000293261"/>
<dbReference type="PeptideAtlas" id="Q96AN5"/>
<dbReference type="ProteomicsDB" id="75976">
    <molecule id="Q96AN5-1"/>
</dbReference>
<dbReference type="ProteomicsDB" id="75977">
    <molecule id="Q96AN5-2"/>
</dbReference>
<dbReference type="Pumba" id="Q96AN5"/>
<dbReference type="Antibodypedia" id="3033">
    <property type="antibodies" value="59 antibodies from 15 providers"/>
</dbReference>
<dbReference type="DNASU" id="55260"/>
<dbReference type="Ensembl" id="ENST00000293261.8">
    <molecule id="Q96AN5-1"/>
    <property type="protein sequence ID" value="ENSP00000293261.2"/>
    <property type="gene ID" value="ENSG00000161558.11"/>
</dbReference>
<dbReference type="Ensembl" id="ENST00000377431.6">
    <molecule id="Q96AN5-2"/>
    <property type="protein sequence ID" value="ENSP00000366649.1"/>
    <property type="gene ID" value="ENSG00000161558.11"/>
</dbReference>
<dbReference type="GeneID" id="55260"/>
<dbReference type="KEGG" id="hsa:55260"/>
<dbReference type="MANE-Select" id="ENST00000293261.8">
    <property type="protein sequence ID" value="ENSP00000293261.2"/>
    <property type="RefSeq nucleotide sequence ID" value="NM_018273.4"/>
    <property type="RefSeq protein sequence ID" value="NP_060743.2"/>
</dbReference>
<dbReference type="UCSC" id="uc002pix.2">
    <molecule id="Q96AN5-1"/>
    <property type="organism name" value="human"/>
</dbReference>
<dbReference type="AGR" id="HGNC:25603"/>
<dbReference type="CTD" id="55260"/>
<dbReference type="DisGeNET" id="55260"/>
<dbReference type="GeneCards" id="TMEM143"/>
<dbReference type="HGNC" id="HGNC:25603">
    <property type="gene designation" value="TMEM143"/>
</dbReference>
<dbReference type="HPA" id="ENSG00000161558">
    <property type="expression patterns" value="Tissue enhanced (heart muscle, skeletal muscle, tongue)"/>
</dbReference>
<dbReference type="neXtProt" id="NX_Q96AN5"/>
<dbReference type="OpenTargets" id="ENSG00000161558"/>
<dbReference type="PharmGKB" id="PA144596251"/>
<dbReference type="VEuPathDB" id="HostDB:ENSG00000161558"/>
<dbReference type="eggNOG" id="ENOG502QR4I">
    <property type="taxonomic scope" value="Eukaryota"/>
</dbReference>
<dbReference type="GeneTree" id="ENSGT00940000154315"/>
<dbReference type="InParanoid" id="Q96AN5"/>
<dbReference type="OMA" id="ERFIPFR"/>
<dbReference type="OrthoDB" id="2020015at2759"/>
<dbReference type="PAN-GO" id="Q96AN5">
    <property type="GO annotations" value="1 GO annotation based on evolutionary models"/>
</dbReference>
<dbReference type="PhylomeDB" id="Q96AN5"/>
<dbReference type="TreeFam" id="TF329116"/>
<dbReference type="PathwayCommons" id="Q96AN5"/>
<dbReference type="SignaLink" id="Q96AN5"/>
<dbReference type="BioGRID-ORCS" id="55260">
    <property type="hits" value="18 hits in 1163 CRISPR screens"/>
</dbReference>
<dbReference type="GenomeRNAi" id="55260"/>
<dbReference type="Pharos" id="Q96AN5">
    <property type="development level" value="Tdark"/>
</dbReference>
<dbReference type="PRO" id="PR:Q96AN5"/>
<dbReference type="Proteomes" id="UP000005640">
    <property type="component" value="Chromosome 19"/>
</dbReference>
<dbReference type="RNAct" id="Q96AN5">
    <property type="molecule type" value="protein"/>
</dbReference>
<dbReference type="Bgee" id="ENSG00000161558">
    <property type="expression patterns" value="Expressed in hindlimb stylopod muscle and 155 other cell types or tissues"/>
</dbReference>
<dbReference type="ExpressionAtlas" id="Q96AN5">
    <property type="expression patterns" value="baseline and differential"/>
</dbReference>
<dbReference type="GO" id="GO:0016020">
    <property type="term" value="C:membrane"/>
    <property type="evidence" value="ECO:0007669"/>
    <property type="project" value="UniProtKB-SubCell"/>
</dbReference>
<dbReference type="GO" id="GO:0005739">
    <property type="term" value="C:mitochondrion"/>
    <property type="evidence" value="ECO:0000314"/>
    <property type="project" value="LIFEdb"/>
</dbReference>
<dbReference type="InterPro" id="IPR022227">
    <property type="entry name" value="DUF3754"/>
</dbReference>
<dbReference type="PANTHER" id="PTHR16095:SF10">
    <property type="entry name" value="TRANSMEMBRANE PROTEIN 143"/>
    <property type="match status" value="1"/>
</dbReference>
<dbReference type="PANTHER" id="PTHR16095">
    <property type="entry name" value="TRANSMEMBRANE PROTEIN 143 FAMILY MEMBER"/>
    <property type="match status" value="1"/>
</dbReference>
<dbReference type="Pfam" id="PF12576">
    <property type="entry name" value="DUF3754"/>
    <property type="match status" value="1"/>
</dbReference>
<comment type="interaction">
    <interactant intactId="EBI-13342951">
        <id>Q96AN5</id>
    </interactant>
    <interactant intactId="EBI-348517">
        <id>O95870</id>
        <label>ABHD16A</label>
    </interactant>
    <organismsDiffer>false</organismsDiffer>
    <experiments>3</experiments>
</comment>
<comment type="interaction">
    <interactant intactId="EBI-13342951">
        <id>Q96AN5</id>
    </interactant>
    <interactant intactId="EBI-13059134">
        <id>Q13520</id>
        <label>AQP6</label>
    </interactant>
    <organismsDiffer>false</organismsDiffer>
    <experiments>3</experiments>
</comment>
<comment type="interaction">
    <interactant intactId="EBI-13342951">
        <id>Q96AN5</id>
    </interactant>
    <interactant intactId="EBI-10267100">
        <id>Q8N6G5</id>
        <label>CSGALNACT2</label>
    </interactant>
    <organismsDiffer>false</organismsDiffer>
    <experiments>3</experiments>
</comment>
<comment type="interaction">
    <interactant intactId="EBI-13342951">
        <id>Q96AN5</id>
    </interactant>
    <interactant intactId="EBI-12831978">
        <id>Q6ZPD8</id>
        <label>DGAT2L6</label>
    </interactant>
    <organismsDiffer>false</organismsDiffer>
    <experiments>3</experiments>
</comment>
<comment type="interaction">
    <interactant intactId="EBI-13342951">
        <id>Q96AN5</id>
    </interactant>
    <interactant intactId="EBI-3923585">
        <id>Q8N5I4</id>
        <label>DHRSX</label>
    </interactant>
    <organismsDiffer>false</organismsDiffer>
    <experiments>3</experiments>
</comment>
<comment type="interaction">
    <interactant intactId="EBI-13342951">
        <id>Q96AN5</id>
    </interactant>
    <interactant intactId="EBI-2830566">
        <id>Q9H400</id>
        <label>LIME1</label>
    </interactant>
    <organismsDiffer>false</organismsDiffer>
    <experiments>3</experiments>
</comment>
<comment type="interaction">
    <interactant intactId="EBI-13342951">
        <id>Q96AN5</id>
    </interactant>
    <interactant intactId="EBI-10264855">
        <id>Q8N112</id>
        <label>LSMEM2</label>
    </interactant>
    <organismsDiffer>false</organismsDiffer>
    <experiments>3</experiments>
</comment>
<comment type="interaction">
    <interactant intactId="EBI-13342951">
        <id>Q96AN5</id>
    </interactant>
    <interactant intactId="EBI-2863634">
        <id>Q9UHE5</id>
        <label>NAT8</label>
    </interactant>
    <organismsDiffer>false</organismsDiffer>
    <experiments>3</experiments>
</comment>
<comment type="interaction">
    <interactant intactId="EBI-13342951">
        <id>Q96AN5</id>
    </interactant>
    <interactant intactId="EBI-1054848">
        <id>Q9P0S3</id>
        <label>ORMDL1</label>
    </interactant>
    <organismsDiffer>false</organismsDiffer>
    <experiments>3</experiments>
</comment>
<comment type="interaction">
    <interactant intactId="EBI-13342951">
        <id>Q96AN5</id>
    </interactant>
    <interactant intactId="EBI-14065960">
        <id>Q96HR9-2</id>
        <label>REEP6</label>
    </interactant>
    <organismsDiffer>false</organismsDiffer>
    <experiments>3</experiments>
</comment>
<comment type="interaction">
    <interactant intactId="EBI-13342951">
        <id>Q96AN5</id>
    </interactant>
    <interactant intactId="EBI-4402330">
        <id>O95562</id>
        <label>SFT2D2</label>
    </interactant>
    <organismsDiffer>false</organismsDiffer>
    <experiments>3</experiments>
</comment>
<comment type="interaction">
    <interactant intactId="EBI-13342951">
        <id>Q96AN5</id>
    </interactant>
    <interactant intactId="EBI-18159983">
        <id>Q3KNW5</id>
        <label>SLC10A6</label>
    </interactant>
    <organismsDiffer>false</organismsDiffer>
    <experiments>3</experiments>
</comment>
<comment type="interaction">
    <interactant intactId="EBI-13342951">
        <id>Q96AN5</id>
    </interactant>
    <interactant intactId="EBI-10171534">
        <id>A0PK00</id>
        <label>TMEM120B</label>
    </interactant>
    <organismsDiffer>false</organismsDiffer>
    <experiments>3</experiments>
</comment>
<comment type="interaction">
    <interactant intactId="EBI-13342951">
        <id>Q96AN5</id>
    </interactant>
    <interactant intactId="EBI-751204">
        <id>Q9BWQ6</id>
        <label>YIPF2</label>
    </interactant>
    <organismsDiffer>false</organismsDiffer>
    <experiments>3</experiments>
</comment>
<comment type="subcellular location">
    <subcellularLocation>
        <location evidence="6">Membrane</location>
        <topology evidence="6">Multi-pass membrane protein</topology>
    </subcellularLocation>
</comment>
<comment type="alternative products">
    <event type="alternative splicing"/>
    <isoform>
        <id>Q96AN5-1</id>
        <name>1</name>
        <sequence type="displayed"/>
    </isoform>
    <isoform>
        <id>Q96AN5-2</id>
        <name>2</name>
        <sequence type="described" ref="VSP_024930"/>
    </isoform>
    <isoform>
        <id>Q96AN5-3</id>
        <name>3</name>
        <sequence type="described" ref="VSP_024931 VSP_024932"/>
    </isoform>
</comment>
<protein>
    <recommendedName>
        <fullName>Transmembrane protein 143</fullName>
    </recommendedName>
</protein>
<organism>
    <name type="scientific">Homo sapiens</name>
    <name type="common">Human</name>
    <dbReference type="NCBI Taxonomy" id="9606"/>
    <lineage>
        <taxon>Eukaryota</taxon>
        <taxon>Metazoa</taxon>
        <taxon>Chordata</taxon>
        <taxon>Craniata</taxon>
        <taxon>Vertebrata</taxon>
        <taxon>Euteleostomi</taxon>
        <taxon>Mammalia</taxon>
        <taxon>Eutheria</taxon>
        <taxon>Euarchontoglires</taxon>
        <taxon>Primates</taxon>
        <taxon>Haplorrhini</taxon>
        <taxon>Catarrhini</taxon>
        <taxon>Hominidae</taxon>
        <taxon>Homo</taxon>
    </lineage>
</organism>